<dbReference type="EC" id="3.1.15.-" evidence="1"/>
<dbReference type="EMBL" id="AP006618">
    <property type="protein sequence ID" value="BAD56132.1"/>
    <property type="molecule type" value="Genomic_DNA"/>
</dbReference>
<dbReference type="SMR" id="Q5Z0A9"/>
<dbReference type="STRING" id="247156.NFA_12870"/>
<dbReference type="KEGG" id="nfa:NFA_12870"/>
<dbReference type="eggNOG" id="COG1949">
    <property type="taxonomic scope" value="Bacteria"/>
</dbReference>
<dbReference type="HOGENOM" id="CLU_064761_3_0_11"/>
<dbReference type="OrthoDB" id="9801329at2"/>
<dbReference type="Proteomes" id="UP000006820">
    <property type="component" value="Chromosome"/>
</dbReference>
<dbReference type="GO" id="GO:0005737">
    <property type="term" value="C:cytoplasm"/>
    <property type="evidence" value="ECO:0007669"/>
    <property type="project" value="UniProtKB-SubCell"/>
</dbReference>
<dbReference type="GO" id="GO:0000175">
    <property type="term" value="F:3'-5'-RNA exonuclease activity"/>
    <property type="evidence" value="ECO:0007669"/>
    <property type="project" value="InterPro"/>
</dbReference>
<dbReference type="GO" id="GO:0003676">
    <property type="term" value="F:nucleic acid binding"/>
    <property type="evidence" value="ECO:0007669"/>
    <property type="project" value="InterPro"/>
</dbReference>
<dbReference type="CDD" id="cd06135">
    <property type="entry name" value="Orn"/>
    <property type="match status" value="1"/>
</dbReference>
<dbReference type="FunFam" id="3.30.420.10:FF:000003">
    <property type="entry name" value="Oligoribonuclease"/>
    <property type="match status" value="1"/>
</dbReference>
<dbReference type="Gene3D" id="3.30.420.10">
    <property type="entry name" value="Ribonuclease H-like superfamily/Ribonuclease H"/>
    <property type="match status" value="1"/>
</dbReference>
<dbReference type="HAMAP" id="MF_00045">
    <property type="entry name" value="Oligoribonuclease"/>
    <property type="match status" value="1"/>
</dbReference>
<dbReference type="InterPro" id="IPR013520">
    <property type="entry name" value="Exonuclease_RNaseT/DNA_pol3"/>
</dbReference>
<dbReference type="InterPro" id="IPR022894">
    <property type="entry name" value="Oligoribonuclease"/>
</dbReference>
<dbReference type="InterPro" id="IPR012337">
    <property type="entry name" value="RNaseH-like_sf"/>
</dbReference>
<dbReference type="InterPro" id="IPR036397">
    <property type="entry name" value="RNaseH_sf"/>
</dbReference>
<dbReference type="NCBIfam" id="NF003765">
    <property type="entry name" value="PRK05359.1"/>
    <property type="match status" value="1"/>
</dbReference>
<dbReference type="PANTHER" id="PTHR11046">
    <property type="entry name" value="OLIGORIBONUCLEASE, MITOCHONDRIAL"/>
    <property type="match status" value="1"/>
</dbReference>
<dbReference type="PANTHER" id="PTHR11046:SF0">
    <property type="entry name" value="OLIGORIBONUCLEASE, MITOCHONDRIAL"/>
    <property type="match status" value="1"/>
</dbReference>
<dbReference type="Pfam" id="PF00929">
    <property type="entry name" value="RNase_T"/>
    <property type="match status" value="1"/>
</dbReference>
<dbReference type="SMART" id="SM00479">
    <property type="entry name" value="EXOIII"/>
    <property type="match status" value="1"/>
</dbReference>
<dbReference type="SUPFAM" id="SSF53098">
    <property type="entry name" value="Ribonuclease H-like"/>
    <property type="match status" value="1"/>
</dbReference>
<gene>
    <name evidence="1" type="primary">orn</name>
    <name type="ordered locus">NFA_12870</name>
</gene>
<evidence type="ECO:0000255" key="1">
    <source>
        <dbReference type="HAMAP-Rule" id="MF_00045"/>
    </source>
</evidence>
<reference key="1">
    <citation type="journal article" date="2004" name="Proc. Natl. Acad. Sci. U.S.A.">
        <title>The complete genomic sequence of Nocardia farcinica IFM 10152.</title>
        <authorList>
            <person name="Ishikawa J."/>
            <person name="Yamashita A."/>
            <person name="Mikami Y."/>
            <person name="Hoshino Y."/>
            <person name="Kurita H."/>
            <person name="Hotta K."/>
            <person name="Shiba T."/>
            <person name="Hattori M."/>
        </authorList>
    </citation>
    <scope>NUCLEOTIDE SEQUENCE [LARGE SCALE GENOMIC DNA]</scope>
    <source>
        <strain>IFM 10152</strain>
    </source>
</reference>
<accession>Q5Z0A9</accession>
<keyword id="KW-0963">Cytoplasm</keyword>
<keyword id="KW-0269">Exonuclease</keyword>
<keyword id="KW-0378">Hydrolase</keyword>
<keyword id="KW-0540">Nuclease</keyword>
<keyword id="KW-1185">Reference proteome</keyword>
<proteinExistence type="inferred from homology"/>
<protein>
    <recommendedName>
        <fullName evidence="1">Oligoribonuclease</fullName>
        <ecNumber evidence="1">3.1.15.-</ecNumber>
    </recommendedName>
</protein>
<name>ORN_NOCFA</name>
<feature type="chain" id="PRO_0000111056" description="Oligoribonuclease">
    <location>
        <begin position="1"/>
        <end position="216"/>
    </location>
</feature>
<feature type="domain" description="Exonuclease" evidence="1">
    <location>
        <begin position="6"/>
        <end position="171"/>
    </location>
</feature>
<feature type="active site" evidence="1">
    <location>
        <position position="128"/>
    </location>
</feature>
<sequence>MSDKLVVWMDCEMTGLRLDSDKLIEVSALVTDSDLNILGDGVDIVIHADDAALAAMPPVVAEMHARSGLTDEVRRSTVTVAEAEQQVLDYIRQYVPTPRTVPLAGNSIATDRAFIARDMPALDAHLHYRMIDVSSIKELCRRWYPRIYFGQPEKGLTHRALADIKESIRELEYYRRTAFVAPPGPSTAEIAAVAAQLGGTAQTAESPQVEGTTQAD</sequence>
<organism>
    <name type="scientific">Nocardia farcinica (strain IFM 10152)</name>
    <dbReference type="NCBI Taxonomy" id="247156"/>
    <lineage>
        <taxon>Bacteria</taxon>
        <taxon>Bacillati</taxon>
        <taxon>Actinomycetota</taxon>
        <taxon>Actinomycetes</taxon>
        <taxon>Mycobacteriales</taxon>
        <taxon>Nocardiaceae</taxon>
        <taxon>Nocardia</taxon>
    </lineage>
</organism>
<comment type="function">
    <text evidence="1">3'-to-5' exoribonuclease specific for small oligoribonucleotides.</text>
</comment>
<comment type="subcellular location">
    <subcellularLocation>
        <location evidence="1">Cytoplasm</location>
    </subcellularLocation>
</comment>
<comment type="similarity">
    <text evidence="1">Belongs to the oligoribonuclease family.</text>
</comment>